<proteinExistence type="inferred from homology"/>
<evidence type="ECO:0000250" key="1"/>
<evidence type="ECO:0000255" key="2"/>
<evidence type="ECO:0000255" key="3">
    <source>
        <dbReference type="PROSITE-ProRule" id="PRU00167"/>
    </source>
</evidence>
<evidence type="ECO:0000255" key="4">
    <source>
        <dbReference type="PROSITE-ProRule" id="PRU00550"/>
    </source>
</evidence>
<evidence type="ECO:0000256" key="5">
    <source>
        <dbReference type="SAM" id="MobiDB-lite"/>
    </source>
</evidence>
<evidence type="ECO:0000305" key="6"/>
<sequence>MEPTAAGNLLEIMDLARTLRQEQLFIQQEQTAFGQLTGALETNAGTITKLAFVCAQQRQILNELLVARNDHDPLLSCRRASAYDSAQFMDAKQVLPYEHALAYEDLFNYLYNTPYLLALSLATADRLSLLSSGQLGQIINTIATGLYGNAINTKDVELLLKLLRELIEIQLLGSEQPRRLLRTNSSSFARLYQRLVESLFSARIFLTAALHAPLMGVLSEHDVWLDLDPHKLMQSFSQKERERRFGQAGEGEHGEEYQRNVARFHAETLGKLHTHAQVFVKSLQQSWALFPSSLRWLLQTLSQQLRQTHRHKEQEIRQLLTDLVFTHFISPAIVSADLVGIIDVNVSERMRHNLNQIVQLLQRLALNDEGSELVQLMELLMVGETGEDVVAILPQQTDFERSQLAINQRELSQFVEFFRLLTSRDEYDVSAEERQRLQRILGRIPKQQQQQQSQSELPDATANSPEKQQNNNNKKNNNRSLMRLGKAKKKLANSMSFSNSNSNSNKNLQPAVEQLPPLANGQANSSNISSASNGDLEQCSSHSGSNTSLSSCGAAPAAPTPAPTAVTNDHQYCARDEPVLMFSIYNASAKSKLKPLTEEEVLKMNCIGQDGSNLLPAVACTTGVVAPSSNNDDVSSLEAMRRPQDDASIGNSDNLEAISEAAHSVASSLDLEEQQERDVHENEDNLSDMVSANVSGRGTPNISGRDTPSSQVTDGDGGGGDMAHHHGHHVRAANPQMQKMLLSKARSDIDDKFCKFELKKFEVDENVSIISDTWSTDVLASDSENTLDATGSERGGDRGDRGDRDRDRNFSTPLIPSAVVLPGDNNFVVEALARAGAGVISGPHMDASDQRSESNWSTDVLASDSEKLAEIDTDDNASITAKSDIGPGSGGGAGVPEAGGGGGVVGDDDDEDEQTPGSSGDGEPDPDPDPDRERLRNGSERSQEDSAFFDAVNSYEDAHHLYHGASSLARSSVRTSYHVMGGESSFQQQYKSSGAEGIGRKTTPLMGTSCMRRQTSAESSISNQSLNLEEPPPPPRALAKHHHHHQHRDRDRDRDRDRDHREHHHKSAALKKKKHQEHKEHQHRDLIDFSDCSEDKDEEEQPPGLVQQLLDMFNQEEQQQQQQQQGCSSQSSVEHRRISMEQRSQCIDGRRNGILAGSMRRHQSLNYENHEIMLNSMLPKTDDDKQELLLCAQTQQQLQLEERAAAAENSCSNRAGAGAGAGARGTSKPPSKATGAIPKSISFDASADKEQQPYRDRERERDRERDRERDRDRERDRDRDRDRDRDREHHSAGIFNKLKQGFFKHRRGGSSSSKNNAIAIAAPSSINPNPSPSSATDPGGRSVSFDPSAGVCVSFGTHYCDSSEDILAKYRRKVSSSSEATNSDSTGNGAGGGAAAAAAAAAAHLHKHVNGGLLPGVAFGSVKQKLRTVLSKTDLHSGDFRQTTPMRPLDATTPLQIYLQIQLAQCISLQRLPQISHVAEALRCLEQLERPQHGQLLVELQHDLQRRQSYLQYLMRHRQQLLLRSEQLEQLEVRLRSEARSCQRCLMQSLVRLYLAWARQQDKLEQFQTEFGQLRASDERVELVEEFVEQLLQQLITSADLLDDWQVDAAREAIERMLLELMYQQVMFPNEDADVSRDTVLSAHIGKLQRFVHPAHPALCIAQEYLGEAPWTFAQQQLCHMAAYKTPREKLQCIINCISSIMSLLRMSCGRVPAADDLLPVLIYVVIMANPPYLLSTVEYISCFLGRKLDGENEFYWTLFGSVVKFIKTMDYLD</sequence>
<feature type="chain" id="PRO_0000324777" description="Receptor-mediated endocytosis protein 6 homolog">
    <location>
        <begin position="1"/>
        <end position="1774"/>
    </location>
</feature>
<feature type="domain" description="Ras-GAP" evidence="3">
    <location>
        <begin position="157"/>
        <end position="396"/>
    </location>
</feature>
<feature type="domain" description="VPS9" evidence="4">
    <location>
        <begin position="1635"/>
        <end position="1774"/>
    </location>
</feature>
<feature type="region of interest" description="Disordered" evidence="5">
    <location>
        <begin position="444"/>
        <end position="480"/>
    </location>
</feature>
<feature type="region of interest" description="Disordered" evidence="5">
    <location>
        <begin position="517"/>
        <end position="564"/>
    </location>
</feature>
<feature type="region of interest" description="Disordered" evidence="5">
    <location>
        <begin position="661"/>
        <end position="727"/>
    </location>
</feature>
<feature type="region of interest" description="Disordered" evidence="5">
    <location>
        <begin position="784"/>
        <end position="811"/>
    </location>
</feature>
<feature type="region of interest" description="Disordered" evidence="5">
    <location>
        <begin position="869"/>
        <end position="947"/>
    </location>
</feature>
<feature type="region of interest" description="Disordered" evidence="5">
    <location>
        <begin position="983"/>
        <end position="1102"/>
    </location>
</feature>
<feature type="region of interest" description="Disordered" evidence="5">
    <location>
        <begin position="1115"/>
        <end position="1142"/>
    </location>
</feature>
<feature type="region of interest" description="Disordered" evidence="5">
    <location>
        <begin position="1214"/>
        <end position="1342"/>
    </location>
</feature>
<feature type="coiled-coil region" evidence="2">
    <location>
        <begin position="1516"/>
        <end position="1546"/>
    </location>
</feature>
<feature type="compositionally biased region" description="Low complexity" evidence="5">
    <location>
        <begin position="519"/>
        <end position="533"/>
    </location>
</feature>
<feature type="compositionally biased region" description="Low complexity" evidence="5">
    <location>
        <begin position="540"/>
        <end position="557"/>
    </location>
</feature>
<feature type="compositionally biased region" description="Basic and acidic residues" evidence="5">
    <location>
        <begin position="674"/>
        <end position="683"/>
    </location>
</feature>
<feature type="compositionally biased region" description="Polar residues" evidence="5">
    <location>
        <begin position="688"/>
        <end position="713"/>
    </location>
</feature>
<feature type="compositionally biased region" description="Basic and acidic residues" evidence="5">
    <location>
        <begin position="794"/>
        <end position="809"/>
    </location>
</feature>
<feature type="compositionally biased region" description="Gly residues" evidence="5">
    <location>
        <begin position="887"/>
        <end position="905"/>
    </location>
</feature>
<feature type="compositionally biased region" description="Basic and acidic residues" evidence="5">
    <location>
        <begin position="929"/>
        <end position="944"/>
    </location>
</feature>
<feature type="compositionally biased region" description="Polar residues" evidence="5">
    <location>
        <begin position="1011"/>
        <end position="1027"/>
    </location>
</feature>
<feature type="compositionally biased region" description="Basic residues" evidence="5">
    <location>
        <begin position="1038"/>
        <end position="1047"/>
    </location>
</feature>
<feature type="compositionally biased region" description="Basic and acidic residues" evidence="5">
    <location>
        <begin position="1048"/>
        <end position="1060"/>
    </location>
</feature>
<feature type="compositionally biased region" description="Basic residues" evidence="5">
    <location>
        <begin position="1061"/>
        <end position="1076"/>
    </location>
</feature>
<feature type="compositionally biased region" description="Basic and acidic residues" evidence="5">
    <location>
        <begin position="1077"/>
        <end position="1087"/>
    </location>
</feature>
<feature type="compositionally biased region" description="Acidic residues" evidence="5">
    <location>
        <begin position="1091"/>
        <end position="1101"/>
    </location>
</feature>
<feature type="compositionally biased region" description="Low complexity" evidence="5">
    <location>
        <begin position="1115"/>
        <end position="1125"/>
    </location>
</feature>
<feature type="compositionally biased region" description="Basic and acidic residues" evidence="5">
    <location>
        <begin position="1246"/>
        <end position="1291"/>
    </location>
</feature>
<feature type="compositionally biased region" description="Low complexity" evidence="5">
    <location>
        <begin position="1310"/>
        <end position="1335"/>
    </location>
</feature>
<feature type="site" description="Arginine finger; crucial for GTP hydrolysis by stabilizing the transition state" evidence="3">
    <location>
        <position position="182"/>
    </location>
</feature>
<protein>
    <recommendedName>
        <fullName>Receptor-mediated endocytosis protein 6 homolog</fullName>
    </recommendedName>
</protein>
<name>RME6_DROPS</name>
<reference key="1">
    <citation type="journal article" date="2005" name="Genome Res.">
        <title>Comparative genome sequencing of Drosophila pseudoobscura: chromosomal, gene, and cis-element evolution.</title>
        <authorList>
            <person name="Richards S."/>
            <person name="Liu Y."/>
            <person name="Bettencourt B.R."/>
            <person name="Hradecky P."/>
            <person name="Letovsky S."/>
            <person name="Nielsen R."/>
            <person name="Thornton K."/>
            <person name="Hubisz M.J."/>
            <person name="Chen R."/>
            <person name="Meisel R.P."/>
            <person name="Couronne O."/>
            <person name="Hua S."/>
            <person name="Smith M.A."/>
            <person name="Zhang P."/>
            <person name="Liu J."/>
            <person name="Bussemaker H.J."/>
            <person name="van Batenburg M.F."/>
            <person name="Howells S.L."/>
            <person name="Scherer S.E."/>
            <person name="Sodergren E."/>
            <person name="Matthews B.B."/>
            <person name="Crosby M.A."/>
            <person name="Schroeder A.J."/>
            <person name="Ortiz-Barrientos D."/>
            <person name="Rives C.M."/>
            <person name="Metzker M.L."/>
            <person name="Muzny D.M."/>
            <person name="Scott G."/>
            <person name="Steffen D."/>
            <person name="Wheeler D.A."/>
            <person name="Worley K.C."/>
            <person name="Havlak P."/>
            <person name="Durbin K.J."/>
            <person name="Egan A."/>
            <person name="Gill R."/>
            <person name="Hume J."/>
            <person name="Morgan M.B."/>
            <person name="Miner G."/>
            <person name="Hamilton C."/>
            <person name="Huang Y."/>
            <person name="Waldron L."/>
            <person name="Verduzco D."/>
            <person name="Clerc-Blankenburg K.P."/>
            <person name="Dubchak I."/>
            <person name="Noor M.A.F."/>
            <person name="Anderson W."/>
            <person name="White K.P."/>
            <person name="Clark A.G."/>
            <person name="Schaeffer S.W."/>
            <person name="Gelbart W.M."/>
            <person name="Weinstock G.M."/>
            <person name="Gibbs R.A."/>
        </authorList>
    </citation>
    <scope>NUCLEOTIDE SEQUENCE [LARGE SCALE GENOMIC DNA]</scope>
    <source>
        <strain>MV2-25 / Tucson 14011-0121.94</strain>
    </source>
</reference>
<comment type="function">
    <text evidence="1">Acts both as a GTPase-activating protein (GAP) and a guanine nucleotide exchange factor (GEF), and participates in endocytosis.</text>
</comment>
<comment type="subcellular location">
    <subcellularLocation>
        <location evidence="1">Membrane</location>
        <topology evidence="1">Peripheral membrane protein</topology>
    </subcellularLocation>
</comment>
<comment type="similarity">
    <text evidence="6">Belongs to the GAPVD1 family.</text>
</comment>
<dbReference type="EMBL" id="CH379064">
    <property type="protein sequence ID" value="EAL31644.2"/>
    <property type="molecule type" value="Genomic_DNA"/>
</dbReference>
<dbReference type="RefSeq" id="XP_001354590.2">
    <property type="nucleotide sequence ID" value="XM_001354554.3"/>
</dbReference>
<dbReference type="SMR" id="Q29HW3"/>
<dbReference type="FunCoup" id="Q29HW3">
    <property type="interactions" value="2572"/>
</dbReference>
<dbReference type="STRING" id="46245.Q29HW3"/>
<dbReference type="EnsemblMetazoa" id="FBtr0287441">
    <property type="protein sequence ID" value="FBpp0285879"/>
    <property type="gene ID" value="FBgn0074109"/>
</dbReference>
<dbReference type="KEGG" id="dpo:4814905"/>
<dbReference type="CTD" id="26130"/>
<dbReference type="eggNOG" id="KOG2319">
    <property type="taxonomic scope" value="Eukaryota"/>
</dbReference>
<dbReference type="HOGENOM" id="CLU_002165_1_0_1"/>
<dbReference type="InParanoid" id="Q29HW3"/>
<dbReference type="OMA" id="ENHEIML"/>
<dbReference type="Proteomes" id="UP000001819">
    <property type="component" value="Chromosome X"/>
</dbReference>
<dbReference type="Bgee" id="FBgn0074109">
    <property type="expression patterns" value="Expressed in female reproductive system and 2 other cell types or tissues"/>
</dbReference>
<dbReference type="GO" id="GO:0005829">
    <property type="term" value="C:cytosol"/>
    <property type="evidence" value="ECO:0000250"/>
    <property type="project" value="UniProtKB"/>
</dbReference>
<dbReference type="GO" id="GO:0030139">
    <property type="term" value="C:endocytic vesicle"/>
    <property type="evidence" value="ECO:0007669"/>
    <property type="project" value="TreeGrafter"/>
</dbReference>
<dbReference type="GO" id="GO:0016020">
    <property type="term" value="C:membrane"/>
    <property type="evidence" value="ECO:0007669"/>
    <property type="project" value="UniProtKB-SubCell"/>
</dbReference>
<dbReference type="GO" id="GO:0032794">
    <property type="term" value="F:GTPase activating protein binding"/>
    <property type="evidence" value="ECO:0000250"/>
    <property type="project" value="UniProtKB"/>
</dbReference>
<dbReference type="GO" id="GO:0005096">
    <property type="term" value="F:GTPase activator activity"/>
    <property type="evidence" value="ECO:0007669"/>
    <property type="project" value="UniProtKB-KW"/>
</dbReference>
<dbReference type="GO" id="GO:0005085">
    <property type="term" value="F:guanyl-nucleotide exchange factor activity"/>
    <property type="evidence" value="ECO:0000250"/>
    <property type="project" value="UniProtKB"/>
</dbReference>
<dbReference type="GO" id="GO:0031267">
    <property type="term" value="F:small GTPase binding"/>
    <property type="evidence" value="ECO:0007669"/>
    <property type="project" value="TreeGrafter"/>
</dbReference>
<dbReference type="GO" id="GO:0006897">
    <property type="term" value="P:endocytosis"/>
    <property type="evidence" value="ECO:0007669"/>
    <property type="project" value="UniProtKB-KW"/>
</dbReference>
<dbReference type="GO" id="GO:0051223">
    <property type="term" value="P:regulation of protein transport"/>
    <property type="evidence" value="ECO:0000250"/>
    <property type="project" value="UniProtKB"/>
</dbReference>
<dbReference type="FunFam" id="1.20.1050.80:FF:000001">
    <property type="entry name" value="GTPase-activating protein and VPS9 domain-containing protein 1 isoform X1"/>
    <property type="match status" value="1"/>
</dbReference>
<dbReference type="FunFam" id="1.10.506.10:FF:000045">
    <property type="entry name" value="Receptor-mediated endocytosis protein 6 homolog"/>
    <property type="match status" value="1"/>
</dbReference>
<dbReference type="Gene3D" id="1.10.506.10">
    <property type="entry name" value="GTPase Activation - p120gap, domain 1"/>
    <property type="match status" value="1"/>
</dbReference>
<dbReference type="Gene3D" id="1.20.1050.80">
    <property type="entry name" value="VPS9 domain"/>
    <property type="match status" value="1"/>
</dbReference>
<dbReference type="InterPro" id="IPR001936">
    <property type="entry name" value="RasGAP_dom"/>
</dbReference>
<dbReference type="InterPro" id="IPR008936">
    <property type="entry name" value="Rho_GTPase_activation_prot"/>
</dbReference>
<dbReference type="InterPro" id="IPR003123">
    <property type="entry name" value="VPS9"/>
</dbReference>
<dbReference type="InterPro" id="IPR045046">
    <property type="entry name" value="Vps9-like"/>
</dbReference>
<dbReference type="InterPro" id="IPR037191">
    <property type="entry name" value="VPS9_dom_sf"/>
</dbReference>
<dbReference type="PANTHER" id="PTHR23101:SF25">
    <property type="entry name" value="GTPASE-ACTIVATING PROTEIN AND VPS9 DOMAIN-CONTAINING PROTEIN 1"/>
    <property type="match status" value="1"/>
</dbReference>
<dbReference type="PANTHER" id="PTHR23101">
    <property type="entry name" value="RAB GDP/GTP EXCHANGE FACTOR"/>
    <property type="match status" value="1"/>
</dbReference>
<dbReference type="Pfam" id="PF00616">
    <property type="entry name" value="RasGAP"/>
    <property type="match status" value="1"/>
</dbReference>
<dbReference type="Pfam" id="PF02204">
    <property type="entry name" value="VPS9"/>
    <property type="match status" value="1"/>
</dbReference>
<dbReference type="SMART" id="SM00167">
    <property type="entry name" value="VPS9"/>
    <property type="match status" value="1"/>
</dbReference>
<dbReference type="SUPFAM" id="SSF48350">
    <property type="entry name" value="GTPase activation domain, GAP"/>
    <property type="match status" value="1"/>
</dbReference>
<dbReference type="SUPFAM" id="SSF109993">
    <property type="entry name" value="VPS9 domain"/>
    <property type="match status" value="1"/>
</dbReference>
<dbReference type="PROSITE" id="PS50018">
    <property type="entry name" value="RAS_GTPASE_ACTIV_2"/>
    <property type="match status" value="1"/>
</dbReference>
<dbReference type="PROSITE" id="PS51205">
    <property type="entry name" value="VPS9"/>
    <property type="match status" value="1"/>
</dbReference>
<accession>Q29HW3</accession>
<organism>
    <name type="scientific">Drosophila pseudoobscura pseudoobscura</name>
    <name type="common">Fruit fly</name>
    <dbReference type="NCBI Taxonomy" id="46245"/>
    <lineage>
        <taxon>Eukaryota</taxon>
        <taxon>Metazoa</taxon>
        <taxon>Ecdysozoa</taxon>
        <taxon>Arthropoda</taxon>
        <taxon>Hexapoda</taxon>
        <taxon>Insecta</taxon>
        <taxon>Pterygota</taxon>
        <taxon>Neoptera</taxon>
        <taxon>Endopterygota</taxon>
        <taxon>Diptera</taxon>
        <taxon>Brachycera</taxon>
        <taxon>Muscomorpha</taxon>
        <taxon>Ephydroidea</taxon>
        <taxon>Drosophilidae</taxon>
        <taxon>Drosophila</taxon>
        <taxon>Sophophora</taxon>
    </lineage>
</organism>
<keyword id="KW-0175">Coiled coil</keyword>
<keyword id="KW-0254">Endocytosis</keyword>
<keyword id="KW-0343">GTPase activation</keyword>
<keyword id="KW-0344">Guanine-nucleotide releasing factor</keyword>
<keyword id="KW-0472">Membrane</keyword>
<keyword id="KW-1185">Reference proteome</keyword>
<gene>
    <name type="ORF">GA14078</name>
</gene>